<reference key="1">
    <citation type="journal article" date="1999" name="J. Mammal. Evol.">
        <title>Molecular systematics of the subfamily Caprinae (Artiodactyla, Bovidae) as determined from cytochrome b sequences.</title>
        <authorList>
            <person name="Hassanin A."/>
            <person name="Pasquet E."/>
            <person name="Vigne J.-D."/>
        </authorList>
    </citation>
    <scope>NUCLEOTIDE SEQUENCE [GENOMIC DNA]</scope>
</reference>
<accession>Q9T5N4</accession>
<sequence length="380" mass="42876">MINIRKTHPLMKIVNNAFIDLPAPSNISSWWNFGSLLGICLILQILTGLFLAMHYTADTATAFHSVTHICRDVNYGWIIRYMHANGASMFFICLFMHVGRGLYYGSYTFLETWNIGVILLFATMATAFMGYVLPWGQMSFWGATVITNLLSAIPYIGTDLVEWIWGGFSVDKATLTRFFAFHFILPFIIAALAMVHLLFLHETGSNNPTGIPSDSDKIPFHPYYTIKDILGALLLILILMLLVLFSPDLLGDPDNYTPANPLNTPPHIKPEWYFLFAYAILRSIPNKLGGVLALVLSILILVLMPLLHTSKQRSMMFRPISQCLFWVLVADLLTLTWIGGQPVEYPYITIGQLASIMYFLLILVLMPVASTIENNLLKWK</sequence>
<gene>
    <name type="primary">MT-CYB</name>
    <name type="synonym">COB</name>
    <name type="synonym">CYTB</name>
    <name type="synonym">MTCYB</name>
</gene>
<dbReference type="EMBL" id="AF064487">
    <property type="protein sequence ID" value="AAC98144.1"/>
    <property type="molecule type" value="Genomic_DNA"/>
</dbReference>
<dbReference type="RefSeq" id="YP_007626666.1">
    <property type="nucleotide sequence ID" value="NC_020746.1"/>
</dbReference>
<dbReference type="SMR" id="Q9T5N4"/>
<dbReference type="GeneID" id="14842545"/>
<dbReference type="CTD" id="4519"/>
<dbReference type="GO" id="GO:0005743">
    <property type="term" value="C:mitochondrial inner membrane"/>
    <property type="evidence" value="ECO:0007669"/>
    <property type="project" value="UniProtKB-SubCell"/>
</dbReference>
<dbReference type="GO" id="GO:0045275">
    <property type="term" value="C:respiratory chain complex III"/>
    <property type="evidence" value="ECO:0007669"/>
    <property type="project" value="InterPro"/>
</dbReference>
<dbReference type="GO" id="GO:0046872">
    <property type="term" value="F:metal ion binding"/>
    <property type="evidence" value="ECO:0007669"/>
    <property type="project" value="UniProtKB-KW"/>
</dbReference>
<dbReference type="GO" id="GO:0008121">
    <property type="term" value="F:ubiquinol-cytochrome-c reductase activity"/>
    <property type="evidence" value="ECO:0007669"/>
    <property type="project" value="InterPro"/>
</dbReference>
<dbReference type="GO" id="GO:0006122">
    <property type="term" value="P:mitochondrial electron transport, ubiquinol to cytochrome c"/>
    <property type="evidence" value="ECO:0007669"/>
    <property type="project" value="TreeGrafter"/>
</dbReference>
<dbReference type="CDD" id="cd00290">
    <property type="entry name" value="cytochrome_b_C"/>
    <property type="match status" value="1"/>
</dbReference>
<dbReference type="CDD" id="cd00284">
    <property type="entry name" value="Cytochrome_b_N"/>
    <property type="match status" value="1"/>
</dbReference>
<dbReference type="FunFam" id="1.20.810.10:FF:000002">
    <property type="entry name" value="Cytochrome b"/>
    <property type="match status" value="1"/>
</dbReference>
<dbReference type="Gene3D" id="1.20.810.10">
    <property type="entry name" value="Cytochrome Bc1 Complex, Chain C"/>
    <property type="match status" value="1"/>
</dbReference>
<dbReference type="InterPro" id="IPR005798">
    <property type="entry name" value="Cyt_b/b6_C"/>
</dbReference>
<dbReference type="InterPro" id="IPR036150">
    <property type="entry name" value="Cyt_b/b6_C_sf"/>
</dbReference>
<dbReference type="InterPro" id="IPR005797">
    <property type="entry name" value="Cyt_b/b6_N"/>
</dbReference>
<dbReference type="InterPro" id="IPR027387">
    <property type="entry name" value="Cytb/b6-like_sf"/>
</dbReference>
<dbReference type="InterPro" id="IPR030689">
    <property type="entry name" value="Cytochrome_b"/>
</dbReference>
<dbReference type="InterPro" id="IPR048260">
    <property type="entry name" value="Cytochrome_b_C_euk/bac"/>
</dbReference>
<dbReference type="InterPro" id="IPR048259">
    <property type="entry name" value="Cytochrome_b_N_euk/bac"/>
</dbReference>
<dbReference type="InterPro" id="IPR016174">
    <property type="entry name" value="Di-haem_cyt_TM"/>
</dbReference>
<dbReference type="PANTHER" id="PTHR19271">
    <property type="entry name" value="CYTOCHROME B"/>
    <property type="match status" value="1"/>
</dbReference>
<dbReference type="PANTHER" id="PTHR19271:SF16">
    <property type="entry name" value="CYTOCHROME B"/>
    <property type="match status" value="1"/>
</dbReference>
<dbReference type="Pfam" id="PF00032">
    <property type="entry name" value="Cytochrom_B_C"/>
    <property type="match status" value="1"/>
</dbReference>
<dbReference type="Pfam" id="PF00033">
    <property type="entry name" value="Cytochrome_B"/>
    <property type="match status" value="1"/>
</dbReference>
<dbReference type="PIRSF" id="PIRSF038885">
    <property type="entry name" value="COB"/>
    <property type="match status" value="1"/>
</dbReference>
<dbReference type="SUPFAM" id="SSF81648">
    <property type="entry name" value="a domain/subunit of cytochrome bc1 complex (Ubiquinol-cytochrome c reductase)"/>
    <property type="match status" value="1"/>
</dbReference>
<dbReference type="SUPFAM" id="SSF81342">
    <property type="entry name" value="Transmembrane di-heme cytochromes"/>
    <property type="match status" value="1"/>
</dbReference>
<dbReference type="PROSITE" id="PS51003">
    <property type="entry name" value="CYTB_CTER"/>
    <property type="match status" value="1"/>
</dbReference>
<dbReference type="PROSITE" id="PS51002">
    <property type="entry name" value="CYTB_NTER"/>
    <property type="match status" value="1"/>
</dbReference>
<protein>
    <recommendedName>
        <fullName>Cytochrome b</fullName>
    </recommendedName>
    <alternativeName>
        <fullName>Complex III subunit 3</fullName>
    </alternativeName>
    <alternativeName>
        <fullName>Complex III subunit III</fullName>
    </alternativeName>
    <alternativeName>
        <fullName>Cytochrome b-c1 complex subunit 3</fullName>
    </alternativeName>
    <alternativeName>
        <fullName>Ubiquinol-cytochrome-c reductase complex cytochrome b subunit</fullName>
    </alternativeName>
</protein>
<organism>
    <name type="scientific">Saiga tatarica</name>
    <name type="common">Saiga antelope</name>
    <dbReference type="NCBI Taxonomy" id="34875"/>
    <lineage>
        <taxon>Eukaryota</taxon>
        <taxon>Metazoa</taxon>
        <taxon>Chordata</taxon>
        <taxon>Craniata</taxon>
        <taxon>Vertebrata</taxon>
        <taxon>Euteleostomi</taxon>
        <taxon>Mammalia</taxon>
        <taxon>Eutheria</taxon>
        <taxon>Laurasiatheria</taxon>
        <taxon>Artiodactyla</taxon>
        <taxon>Ruminantia</taxon>
        <taxon>Pecora</taxon>
        <taxon>Bovidae</taxon>
        <taxon>Antilopinae</taxon>
        <taxon>Saiga</taxon>
    </lineage>
</organism>
<keyword id="KW-0249">Electron transport</keyword>
<keyword id="KW-0349">Heme</keyword>
<keyword id="KW-0408">Iron</keyword>
<keyword id="KW-0472">Membrane</keyword>
<keyword id="KW-0479">Metal-binding</keyword>
<keyword id="KW-0496">Mitochondrion</keyword>
<keyword id="KW-0999">Mitochondrion inner membrane</keyword>
<keyword id="KW-0679">Respiratory chain</keyword>
<keyword id="KW-0812">Transmembrane</keyword>
<keyword id="KW-1133">Transmembrane helix</keyword>
<keyword id="KW-0813">Transport</keyword>
<keyword id="KW-0830">Ubiquinone</keyword>
<proteinExistence type="inferred from homology"/>
<name>CYB_SAITA</name>
<evidence type="ECO:0000250" key="1"/>
<evidence type="ECO:0000250" key="2">
    <source>
        <dbReference type="UniProtKB" id="P00157"/>
    </source>
</evidence>
<evidence type="ECO:0000255" key="3">
    <source>
        <dbReference type="PROSITE-ProRule" id="PRU00967"/>
    </source>
</evidence>
<evidence type="ECO:0000255" key="4">
    <source>
        <dbReference type="PROSITE-ProRule" id="PRU00968"/>
    </source>
</evidence>
<feature type="chain" id="PRO_0000061512" description="Cytochrome b">
    <location>
        <begin position="1"/>
        <end position="380"/>
    </location>
</feature>
<feature type="transmembrane region" description="Helical" evidence="2">
    <location>
        <begin position="33"/>
        <end position="53"/>
    </location>
</feature>
<feature type="transmembrane region" description="Helical" evidence="2">
    <location>
        <begin position="77"/>
        <end position="98"/>
    </location>
</feature>
<feature type="transmembrane region" description="Helical" evidence="2">
    <location>
        <begin position="113"/>
        <end position="133"/>
    </location>
</feature>
<feature type="transmembrane region" description="Helical" evidence="2">
    <location>
        <begin position="178"/>
        <end position="198"/>
    </location>
</feature>
<feature type="transmembrane region" description="Helical" evidence="2">
    <location>
        <begin position="226"/>
        <end position="246"/>
    </location>
</feature>
<feature type="transmembrane region" description="Helical" evidence="2">
    <location>
        <begin position="288"/>
        <end position="308"/>
    </location>
</feature>
<feature type="transmembrane region" description="Helical" evidence="2">
    <location>
        <begin position="320"/>
        <end position="340"/>
    </location>
</feature>
<feature type="transmembrane region" description="Helical" evidence="2">
    <location>
        <begin position="347"/>
        <end position="367"/>
    </location>
</feature>
<feature type="binding site" description="axial binding residue" evidence="2">
    <location>
        <position position="83"/>
    </location>
    <ligand>
        <name>heme b</name>
        <dbReference type="ChEBI" id="CHEBI:60344"/>
        <label>b562</label>
    </ligand>
    <ligandPart>
        <name>Fe</name>
        <dbReference type="ChEBI" id="CHEBI:18248"/>
    </ligandPart>
</feature>
<feature type="binding site" description="axial binding residue" evidence="2">
    <location>
        <position position="97"/>
    </location>
    <ligand>
        <name>heme b</name>
        <dbReference type="ChEBI" id="CHEBI:60344"/>
        <label>b566</label>
    </ligand>
    <ligandPart>
        <name>Fe</name>
        <dbReference type="ChEBI" id="CHEBI:18248"/>
    </ligandPart>
</feature>
<feature type="binding site" description="axial binding residue" evidence="2">
    <location>
        <position position="182"/>
    </location>
    <ligand>
        <name>heme b</name>
        <dbReference type="ChEBI" id="CHEBI:60344"/>
        <label>b562</label>
    </ligand>
    <ligandPart>
        <name>Fe</name>
        <dbReference type="ChEBI" id="CHEBI:18248"/>
    </ligandPart>
</feature>
<feature type="binding site" description="axial binding residue" evidence="2">
    <location>
        <position position="196"/>
    </location>
    <ligand>
        <name>heme b</name>
        <dbReference type="ChEBI" id="CHEBI:60344"/>
        <label>b566</label>
    </ligand>
    <ligandPart>
        <name>Fe</name>
        <dbReference type="ChEBI" id="CHEBI:18248"/>
    </ligandPart>
</feature>
<feature type="binding site" evidence="2">
    <location>
        <position position="201"/>
    </location>
    <ligand>
        <name>a ubiquinone</name>
        <dbReference type="ChEBI" id="CHEBI:16389"/>
    </ligand>
</feature>
<geneLocation type="mitochondrion"/>
<comment type="function">
    <text evidence="2">Component of the ubiquinol-cytochrome c reductase complex (complex III or cytochrome b-c1 complex) that is part of the mitochondrial respiratory chain. The b-c1 complex mediates electron transfer from ubiquinol to cytochrome c. Contributes to the generation of a proton gradient across the mitochondrial membrane that is then used for ATP synthesis.</text>
</comment>
<comment type="cofactor">
    <cofactor evidence="2">
        <name>heme b</name>
        <dbReference type="ChEBI" id="CHEBI:60344"/>
    </cofactor>
    <text evidence="2">Binds 2 heme b groups non-covalently.</text>
</comment>
<comment type="subunit">
    <text evidence="2">The cytochrome bc1 complex contains 11 subunits: 3 respiratory subunits (MT-CYB, CYC1 and UQCRFS1), 2 core proteins (UQCRC1 and UQCRC2) and 6 low-molecular weight proteins (UQCRH/QCR6, UQCRB/QCR7, UQCRQ/QCR8, UQCR10/QCR9, UQCR11/QCR10 and a cleavage product of UQCRFS1). This cytochrome bc1 complex then forms a dimer.</text>
</comment>
<comment type="subcellular location">
    <subcellularLocation>
        <location evidence="2">Mitochondrion inner membrane</location>
        <topology evidence="2">Multi-pass membrane protein</topology>
    </subcellularLocation>
</comment>
<comment type="miscellaneous">
    <text evidence="1">Heme 1 (or BL or b562) is low-potential and absorbs at about 562 nm, and heme 2 (or BH or b566) is high-potential and absorbs at about 566 nm.</text>
</comment>
<comment type="similarity">
    <text evidence="3 4">Belongs to the cytochrome b family.</text>
</comment>
<comment type="caution">
    <text evidence="2">The full-length protein contains only eight transmembrane helices, not nine as predicted by bioinformatics tools.</text>
</comment>